<organism>
    <name type="scientific">Drosophila willistoni</name>
    <name type="common">Fruit fly</name>
    <dbReference type="NCBI Taxonomy" id="7260"/>
    <lineage>
        <taxon>Eukaryota</taxon>
        <taxon>Metazoa</taxon>
        <taxon>Ecdysozoa</taxon>
        <taxon>Arthropoda</taxon>
        <taxon>Hexapoda</taxon>
        <taxon>Insecta</taxon>
        <taxon>Pterygota</taxon>
        <taxon>Neoptera</taxon>
        <taxon>Endopterygota</taxon>
        <taxon>Diptera</taxon>
        <taxon>Brachycera</taxon>
        <taxon>Muscomorpha</taxon>
        <taxon>Ephydroidea</taxon>
        <taxon>Drosophilidae</taxon>
        <taxon>Drosophila</taxon>
        <taxon>Sophophora</taxon>
    </lineage>
</organism>
<reference key="1">
    <citation type="journal article" date="2007" name="Nature">
        <title>Evolution of genes and genomes on the Drosophila phylogeny.</title>
        <authorList>
            <consortium name="Drosophila 12 genomes consortium"/>
        </authorList>
    </citation>
    <scope>NUCLEOTIDE SEQUENCE [LARGE SCALE GENOMIC DNA]</scope>
    <source>
        <strain>Tucson 14030-0811.24</strain>
    </source>
</reference>
<gene>
    <name type="primary">EF-G2</name>
    <name type="ORF">GK11305</name>
</gene>
<comment type="function">
    <text evidence="1">Mitochondrial GTPase that mediates the disassembly of ribosomes from messenger RNA at the termination of mitochondrial protein biosynthesis. Not involved in the GTP-dependent ribosomal translocation step during translation elongation.</text>
</comment>
<comment type="subcellular location">
    <subcellularLocation>
        <location evidence="1">Mitochondrion</location>
    </subcellularLocation>
</comment>
<comment type="similarity">
    <text evidence="1">Belongs to the TRAFAC class translation factor GTPase superfamily. Classic translation factor GTPase family. EF-G/EF-2 subfamily.</text>
</comment>
<accession>B4NAU8</accession>
<dbReference type="EMBL" id="CH964232">
    <property type="protein sequence ID" value="EDW80912.1"/>
    <property type="molecule type" value="Genomic_DNA"/>
</dbReference>
<dbReference type="SMR" id="B4NAU8"/>
<dbReference type="STRING" id="7260.B4NAU8"/>
<dbReference type="EnsemblMetazoa" id="FBtr0241956">
    <property type="protein sequence ID" value="FBpp0240448"/>
    <property type="gene ID" value="FBgn0213316"/>
</dbReference>
<dbReference type="EnsemblMetazoa" id="XM_002069890.4">
    <property type="protein sequence ID" value="XP_002069926.1"/>
    <property type="gene ID" value="LOC6648107"/>
</dbReference>
<dbReference type="GeneID" id="6648107"/>
<dbReference type="KEGG" id="dwi:6648107"/>
<dbReference type="CTD" id="42670"/>
<dbReference type="eggNOG" id="KOG0464">
    <property type="taxonomic scope" value="Eukaryota"/>
</dbReference>
<dbReference type="HOGENOM" id="CLU_002794_4_1_1"/>
<dbReference type="OMA" id="GPQFTFP"/>
<dbReference type="OrthoDB" id="198619at2759"/>
<dbReference type="PhylomeDB" id="B4NAU8"/>
<dbReference type="Proteomes" id="UP000007798">
    <property type="component" value="Unassembled WGS sequence"/>
</dbReference>
<dbReference type="GO" id="GO:0005739">
    <property type="term" value="C:mitochondrion"/>
    <property type="evidence" value="ECO:0007669"/>
    <property type="project" value="UniProtKB-SubCell"/>
</dbReference>
<dbReference type="GO" id="GO:0005525">
    <property type="term" value="F:GTP binding"/>
    <property type="evidence" value="ECO:0007669"/>
    <property type="project" value="UniProtKB-UniRule"/>
</dbReference>
<dbReference type="GO" id="GO:0003924">
    <property type="term" value="F:GTPase activity"/>
    <property type="evidence" value="ECO:0000250"/>
    <property type="project" value="UniProtKB"/>
</dbReference>
<dbReference type="GO" id="GO:0032543">
    <property type="term" value="P:mitochondrial translation"/>
    <property type="evidence" value="ECO:0000250"/>
    <property type="project" value="UniProtKB"/>
</dbReference>
<dbReference type="GO" id="GO:0032790">
    <property type="term" value="P:ribosome disassembly"/>
    <property type="evidence" value="ECO:0000250"/>
    <property type="project" value="UniProtKB"/>
</dbReference>
<dbReference type="CDD" id="cd16262">
    <property type="entry name" value="EFG_III"/>
    <property type="match status" value="1"/>
</dbReference>
<dbReference type="CDD" id="cd03713">
    <property type="entry name" value="EFG_mtEFG_C"/>
    <property type="match status" value="1"/>
</dbReference>
<dbReference type="FunFam" id="3.30.70.240:FF:000001">
    <property type="entry name" value="Elongation factor G"/>
    <property type="match status" value="1"/>
</dbReference>
<dbReference type="FunFam" id="2.40.30.10:FF:000286">
    <property type="entry name" value="Ribosome-releasing factor 2, mitochondrial"/>
    <property type="match status" value="1"/>
</dbReference>
<dbReference type="FunFam" id="3.30.230.10:FF:000033">
    <property type="entry name" value="Ribosome-releasing factor 2, mitochondrial"/>
    <property type="match status" value="1"/>
</dbReference>
<dbReference type="FunFam" id="3.30.70.870:FF:000005">
    <property type="entry name" value="Ribosome-releasing factor 2, mitochondrial"/>
    <property type="match status" value="1"/>
</dbReference>
<dbReference type="FunFam" id="3.40.50.300:FF:000514">
    <property type="entry name" value="Ribosome-releasing factor 2, mitochondrial"/>
    <property type="match status" value="1"/>
</dbReference>
<dbReference type="Gene3D" id="3.30.230.10">
    <property type="match status" value="1"/>
</dbReference>
<dbReference type="Gene3D" id="3.30.70.240">
    <property type="match status" value="1"/>
</dbReference>
<dbReference type="Gene3D" id="3.30.70.870">
    <property type="entry name" value="Elongation Factor G (Translational Gtpase), domain 3"/>
    <property type="match status" value="1"/>
</dbReference>
<dbReference type="Gene3D" id="3.40.50.300">
    <property type="entry name" value="P-loop containing nucleotide triphosphate hydrolases"/>
    <property type="match status" value="1"/>
</dbReference>
<dbReference type="Gene3D" id="2.40.30.10">
    <property type="entry name" value="Translation factors"/>
    <property type="match status" value="1"/>
</dbReference>
<dbReference type="HAMAP" id="MF_03059">
    <property type="entry name" value="mEF_G_2"/>
    <property type="match status" value="1"/>
</dbReference>
<dbReference type="InterPro" id="IPR053905">
    <property type="entry name" value="EF-G-like_DII"/>
</dbReference>
<dbReference type="InterPro" id="IPR030851">
    <property type="entry name" value="EFG2"/>
</dbReference>
<dbReference type="InterPro" id="IPR041095">
    <property type="entry name" value="EFG_II"/>
</dbReference>
<dbReference type="InterPro" id="IPR009022">
    <property type="entry name" value="EFG_III"/>
</dbReference>
<dbReference type="InterPro" id="IPR035647">
    <property type="entry name" value="EFG_III/V"/>
</dbReference>
<dbReference type="InterPro" id="IPR035649">
    <property type="entry name" value="EFG_V"/>
</dbReference>
<dbReference type="InterPro" id="IPR000640">
    <property type="entry name" value="EFG_V-like"/>
</dbReference>
<dbReference type="InterPro" id="IPR031157">
    <property type="entry name" value="G_TR_CS"/>
</dbReference>
<dbReference type="InterPro" id="IPR027417">
    <property type="entry name" value="P-loop_NTPase"/>
</dbReference>
<dbReference type="InterPro" id="IPR020568">
    <property type="entry name" value="Ribosomal_Su5_D2-typ_SF"/>
</dbReference>
<dbReference type="InterPro" id="IPR014721">
    <property type="entry name" value="Ribsml_uS5_D2-typ_fold_subgr"/>
</dbReference>
<dbReference type="InterPro" id="IPR005225">
    <property type="entry name" value="Small_GTP-bd"/>
</dbReference>
<dbReference type="InterPro" id="IPR000795">
    <property type="entry name" value="T_Tr_GTP-bd_dom"/>
</dbReference>
<dbReference type="InterPro" id="IPR009000">
    <property type="entry name" value="Transl_B-barrel_sf"/>
</dbReference>
<dbReference type="NCBIfam" id="TIGR00231">
    <property type="entry name" value="small_GTP"/>
    <property type="match status" value="1"/>
</dbReference>
<dbReference type="PANTHER" id="PTHR43261:SF1">
    <property type="entry name" value="RIBOSOME-RELEASING FACTOR 2, MITOCHONDRIAL"/>
    <property type="match status" value="1"/>
</dbReference>
<dbReference type="PANTHER" id="PTHR43261">
    <property type="entry name" value="TRANSLATION ELONGATION FACTOR G-RELATED"/>
    <property type="match status" value="1"/>
</dbReference>
<dbReference type="Pfam" id="PF22042">
    <property type="entry name" value="EF-G_D2"/>
    <property type="match status" value="1"/>
</dbReference>
<dbReference type="Pfam" id="PF00679">
    <property type="entry name" value="EFG_C"/>
    <property type="match status" value="1"/>
</dbReference>
<dbReference type="Pfam" id="PF14492">
    <property type="entry name" value="EFG_III"/>
    <property type="match status" value="1"/>
</dbReference>
<dbReference type="Pfam" id="PF00009">
    <property type="entry name" value="GTP_EFTU"/>
    <property type="match status" value="1"/>
</dbReference>
<dbReference type="PRINTS" id="PR00315">
    <property type="entry name" value="ELONGATNFCT"/>
</dbReference>
<dbReference type="SMART" id="SM00838">
    <property type="entry name" value="EFG_C"/>
    <property type="match status" value="1"/>
</dbReference>
<dbReference type="SUPFAM" id="SSF54980">
    <property type="entry name" value="EF-G C-terminal domain-like"/>
    <property type="match status" value="2"/>
</dbReference>
<dbReference type="SUPFAM" id="SSF52540">
    <property type="entry name" value="P-loop containing nucleoside triphosphate hydrolases"/>
    <property type="match status" value="1"/>
</dbReference>
<dbReference type="SUPFAM" id="SSF54211">
    <property type="entry name" value="Ribosomal protein S5 domain 2-like"/>
    <property type="match status" value="1"/>
</dbReference>
<dbReference type="SUPFAM" id="SSF50447">
    <property type="entry name" value="Translation proteins"/>
    <property type="match status" value="1"/>
</dbReference>
<dbReference type="PROSITE" id="PS00301">
    <property type="entry name" value="G_TR_1"/>
    <property type="match status" value="1"/>
</dbReference>
<dbReference type="PROSITE" id="PS51722">
    <property type="entry name" value="G_TR_2"/>
    <property type="match status" value="1"/>
</dbReference>
<proteinExistence type="inferred from homology"/>
<sequence>MLRYVYFNGFGMRQGLLKRCSSHILRRSYSSDIRNIGILAHIDAGKTTTTERMLFYAGKTRSLGEVHRGNTVTDYLTQERERGITICSSAVTFPWNGKRINLLDTPGHIDFTMEVEQSLHAVDGVIVVLDATAGVEAQTMTVWSQADKHRLPRLVFVNKMDRPDADFNKCVEDLKSKLETFPVCIQYPAKSNEGQLGIYDVITLEQLNWQQKDLGRSYSKLKLEPSDGLRQLQDKRNELIDQLSGLDDELADVVISTESFDKVSNELVNKALRRVICQQKAVPVLLGSAYKNIGIQCLMDAVNHYLPAPEERNEIYNCFGNELAGKVFKIVHDKQRGPLTLVRVMRGELKRGMRLTCSSGQAEVISKLYEPLADEYREVSVVSSGDVALCAGLKSTVTGDLLTSSQSSLKNAEKRFKQQRHSDGMSEEEDDDEDHHLDGLFDLAPQIPDAVYFCSIEPPSISSQTAMEQALRQLQREDPSLRVSYDSITGQTVLGGMGELHMDIIKSRILSEYKIDVDLGPLQIAYKETIEAPSLTTLSVEKEIAGTKQNVSITLELVKNQSEIFSLDKSPENLQNLNKLRPRIVQVLRKGSISALERGPRVGGQVVDTQIRLHNAIIGRGTADAFIMATAAQCVQKLLSENGTRLLEPIMALQIVAPSERVSSIMADLSRRRAIINDVLPKGDRNKLILINAPLAELPGYASTLRTISSGTASMTMQPCGFSNMNSSDESLAIRRAQGLE</sequence>
<protein>
    <recommendedName>
        <fullName evidence="1">Ribosome-releasing factor 2, mitochondrial</fullName>
        <shortName evidence="1">RRF2mt</shortName>
    </recommendedName>
    <alternativeName>
        <fullName evidence="1">Elongation factor G 2, mitochondrial</fullName>
        <shortName evidence="1">EF-G2mt</shortName>
        <shortName evidence="1">mEF-G 2</shortName>
    </alternativeName>
</protein>
<keyword id="KW-0342">GTP-binding</keyword>
<keyword id="KW-0496">Mitochondrion</keyword>
<keyword id="KW-0547">Nucleotide-binding</keyword>
<keyword id="KW-0648">Protein biosynthesis</keyword>
<keyword id="KW-1185">Reference proteome</keyword>
<keyword id="KW-0809">Transit peptide</keyword>
<name>RRF2M_DROWI</name>
<feature type="transit peptide" description="Mitochondrion" evidence="1">
    <location>
        <begin position="1"/>
        <end position="29"/>
    </location>
</feature>
<feature type="chain" id="PRO_0000385606" description="Ribosome-releasing factor 2, mitochondrial">
    <location>
        <begin position="30"/>
        <end position="741"/>
    </location>
</feature>
<feature type="domain" description="tr-type G">
    <location>
        <begin position="31"/>
        <end position="310"/>
    </location>
</feature>
<feature type="region of interest" description="Disordered" evidence="2">
    <location>
        <begin position="408"/>
        <end position="436"/>
    </location>
</feature>
<feature type="compositionally biased region" description="Basic and acidic residues" evidence="2">
    <location>
        <begin position="411"/>
        <end position="424"/>
    </location>
</feature>
<feature type="binding site" evidence="1">
    <location>
        <begin position="40"/>
        <end position="47"/>
    </location>
    <ligand>
        <name>GTP</name>
        <dbReference type="ChEBI" id="CHEBI:37565"/>
    </ligand>
</feature>
<feature type="binding site" evidence="1">
    <location>
        <begin position="104"/>
        <end position="108"/>
    </location>
    <ligand>
        <name>GTP</name>
        <dbReference type="ChEBI" id="CHEBI:37565"/>
    </ligand>
</feature>
<feature type="binding site" evidence="1">
    <location>
        <begin position="158"/>
        <end position="161"/>
    </location>
    <ligand>
        <name>GTP</name>
        <dbReference type="ChEBI" id="CHEBI:37565"/>
    </ligand>
</feature>
<evidence type="ECO:0000255" key="1">
    <source>
        <dbReference type="HAMAP-Rule" id="MF_03059"/>
    </source>
</evidence>
<evidence type="ECO:0000256" key="2">
    <source>
        <dbReference type="SAM" id="MobiDB-lite"/>
    </source>
</evidence>